<proteinExistence type="inferred from homology"/>
<feature type="signal peptide" evidence="2">
    <location>
        <begin position="1"/>
        <end position="18"/>
    </location>
</feature>
<feature type="chain" id="PRO_0000394108" description="Probable beta-glucosidase D">
    <location>
        <begin position="19"/>
        <end position="812"/>
    </location>
</feature>
<feature type="region of interest" description="Disordered" evidence="3">
    <location>
        <begin position="186"/>
        <end position="248"/>
    </location>
</feature>
<feature type="compositionally biased region" description="Gly residues" evidence="3">
    <location>
        <begin position="191"/>
        <end position="207"/>
    </location>
</feature>
<feature type="compositionally biased region" description="Polar residues" evidence="3">
    <location>
        <begin position="211"/>
        <end position="225"/>
    </location>
</feature>
<feature type="compositionally biased region" description="Gly residues" evidence="3">
    <location>
        <begin position="236"/>
        <end position="245"/>
    </location>
</feature>
<feature type="active site" evidence="1">
    <location>
        <position position="324"/>
    </location>
</feature>
<feature type="glycosylation site" description="N-linked (GlcNAc...) asparagine" evidence="2">
    <location>
        <position position="53"/>
    </location>
</feature>
<feature type="glycosylation site" description="N-linked (GlcNAc...) asparagine" evidence="2">
    <location>
        <position position="188"/>
    </location>
</feature>
<feature type="glycosylation site" description="N-linked (GlcNAc...) asparagine" evidence="2">
    <location>
        <position position="296"/>
    </location>
</feature>
<feature type="glycosylation site" description="N-linked (GlcNAc...) asparagine" evidence="2">
    <location>
        <position position="360"/>
    </location>
</feature>
<feature type="glycosylation site" description="N-linked (GlcNAc...) asparagine" evidence="2">
    <location>
        <position position="384"/>
    </location>
</feature>
<feature type="glycosylation site" description="N-linked (GlcNAc...) asparagine" evidence="2">
    <location>
        <position position="422"/>
    </location>
</feature>
<feature type="glycosylation site" description="N-linked (GlcNAc...) asparagine" evidence="2">
    <location>
        <position position="501"/>
    </location>
</feature>
<feature type="glycosylation site" description="N-linked (GlcNAc...) asparagine" evidence="2">
    <location>
        <position position="592"/>
    </location>
</feature>
<feature type="glycosylation site" description="N-linked (GlcNAc...) asparagine" evidence="2">
    <location>
        <position position="646"/>
    </location>
</feature>
<dbReference type="EC" id="3.2.1.21"/>
<dbReference type="EMBL" id="AACD01000135">
    <property type="protein sequence ID" value="EAA59569.1"/>
    <property type="status" value="ALT_SEQ"/>
    <property type="molecule type" value="Genomic_DNA"/>
</dbReference>
<dbReference type="EMBL" id="BN001302">
    <property type="protein sequence ID" value="CBF73514.1"/>
    <property type="molecule type" value="Genomic_DNA"/>
</dbReference>
<dbReference type="RefSeq" id="XP_681184.1">
    <property type="nucleotide sequence ID" value="XM_676092.1"/>
</dbReference>
<dbReference type="SMR" id="Q5AUW5"/>
<dbReference type="STRING" id="227321.Q5AUW5"/>
<dbReference type="CAZy" id="GH3">
    <property type="family name" value="Glycoside Hydrolase Family 3"/>
</dbReference>
<dbReference type="GlyCosmos" id="Q5AUW5">
    <property type="glycosylation" value="9 sites, No reported glycans"/>
</dbReference>
<dbReference type="EnsemblFungi" id="CBF73514">
    <property type="protein sequence ID" value="CBF73514"/>
    <property type="gene ID" value="ANIA_07915"/>
</dbReference>
<dbReference type="KEGG" id="ani:ANIA_07915"/>
<dbReference type="VEuPathDB" id="FungiDB:AN7915"/>
<dbReference type="eggNOG" id="ENOG502QR4D">
    <property type="taxonomic scope" value="Eukaryota"/>
</dbReference>
<dbReference type="HOGENOM" id="CLU_004542_2_1_1"/>
<dbReference type="InParanoid" id="Q5AUW5"/>
<dbReference type="OMA" id="WVLNDTY"/>
<dbReference type="OrthoDB" id="416222at2759"/>
<dbReference type="UniPathway" id="UPA00696"/>
<dbReference type="Proteomes" id="UP000000560">
    <property type="component" value="Chromosome II"/>
</dbReference>
<dbReference type="GO" id="GO:0005576">
    <property type="term" value="C:extracellular region"/>
    <property type="evidence" value="ECO:0007669"/>
    <property type="project" value="UniProtKB-SubCell"/>
</dbReference>
<dbReference type="GO" id="GO:0008422">
    <property type="term" value="F:beta-glucosidase activity"/>
    <property type="evidence" value="ECO:0000318"/>
    <property type="project" value="GO_Central"/>
</dbReference>
<dbReference type="GO" id="GO:0030245">
    <property type="term" value="P:cellulose catabolic process"/>
    <property type="evidence" value="ECO:0007669"/>
    <property type="project" value="UniProtKB-UniPathway"/>
</dbReference>
<dbReference type="GO" id="GO:0009251">
    <property type="term" value="P:glucan catabolic process"/>
    <property type="evidence" value="ECO:0000318"/>
    <property type="project" value="GO_Central"/>
</dbReference>
<dbReference type="GO" id="GO:0019748">
    <property type="term" value="P:secondary metabolic process"/>
    <property type="evidence" value="ECO:0000270"/>
    <property type="project" value="AspGD"/>
</dbReference>
<dbReference type="FunFam" id="2.60.40.10:FF:000757">
    <property type="entry name" value="Beta-glucosidase G"/>
    <property type="match status" value="1"/>
</dbReference>
<dbReference type="FunFam" id="3.40.50.1700:FF:000021">
    <property type="entry name" value="Probable beta-glucosidase D"/>
    <property type="match status" value="1"/>
</dbReference>
<dbReference type="Gene3D" id="3.40.50.1700">
    <property type="entry name" value="Glycoside hydrolase family 3 C-terminal domain"/>
    <property type="match status" value="1"/>
</dbReference>
<dbReference type="Gene3D" id="3.20.20.300">
    <property type="entry name" value="Glycoside hydrolase, family 3, N-terminal domain"/>
    <property type="match status" value="1"/>
</dbReference>
<dbReference type="Gene3D" id="2.60.40.10">
    <property type="entry name" value="Immunoglobulins"/>
    <property type="match status" value="1"/>
</dbReference>
<dbReference type="InterPro" id="IPR050288">
    <property type="entry name" value="Cellulose_deg_GH3"/>
</dbReference>
<dbReference type="InterPro" id="IPR026891">
    <property type="entry name" value="Fn3-like"/>
</dbReference>
<dbReference type="InterPro" id="IPR002772">
    <property type="entry name" value="Glyco_hydro_3_C"/>
</dbReference>
<dbReference type="InterPro" id="IPR036881">
    <property type="entry name" value="Glyco_hydro_3_C_sf"/>
</dbReference>
<dbReference type="InterPro" id="IPR001764">
    <property type="entry name" value="Glyco_hydro_3_N"/>
</dbReference>
<dbReference type="InterPro" id="IPR036962">
    <property type="entry name" value="Glyco_hydro_3_N_sf"/>
</dbReference>
<dbReference type="InterPro" id="IPR017853">
    <property type="entry name" value="Glycoside_hydrolase_SF"/>
</dbReference>
<dbReference type="InterPro" id="IPR013783">
    <property type="entry name" value="Ig-like_fold"/>
</dbReference>
<dbReference type="PANTHER" id="PTHR42715">
    <property type="entry name" value="BETA-GLUCOSIDASE"/>
    <property type="match status" value="1"/>
</dbReference>
<dbReference type="PANTHER" id="PTHR42715:SF14">
    <property type="entry name" value="BETA-GLUCOSIDASE D-RELATED"/>
    <property type="match status" value="1"/>
</dbReference>
<dbReference type="Pfam" id="PF14310">
    <property type="entry name" value="Fn3-like"/>
    <property type="match status" value="1"/>
</dbReference>
<dbReference type="Pfam" id="PF00933">
    <property type="entry name" value="Glyco_hydro_3"/>
    <property type="match status" value="2"/>
</dbReference>
<dbReference type="Pfam" id="PF01915">
    <property type="entry name" value="Glyco_hydro_3_C"/>
    <property type="match status" value="1"/>
</dbReference>
<dbReference type="PRINTS" id="PR00133">
    <property type="entry name" value="GLHYDRLASE3"/>
</dbReference>
<dbReference type="SMART" id="SM01217">
    <property type="entry name" value="Fn3_like"/>
    <property type="match status" value="1"/>
</dbReference>
<dbReference type="SUPFAM" id="SSF51445">
    <property type="entry name" value="(Trans)glycosidases"/>
    <property type="match status" value="2"/>
</dbReference>
<dbReference type="SUPFAM" id="SSF52279">
    <property type="entry name" value="Beta-D-glucan exohydrolase, C-terminal domain"/>
    <property type="match status" value="1"/>
</dbReference>
<protein>
    <recommendedName>
        <fullName>Probable beta-glucosidase D</fullName>
        <ecNumber>3.2.1.21</ecNumber>
    </recommendedName>
    <alternativeName>
        <fullName>Beta-D-glucoside glucohydrolase D</fullName>
    </alternativeName>
    <alternativeName>
        <fullName>Cellobiase D</fullName>
    </alternativeName>
    <alternativeName>
        <fullName>Gentiobiase D</fullName>
    </alternativeName>
</protein>
<comment type="function">
    <text evidence="1">Beta-glucosidases are one of a number of cellulolytic enzymes involved in the degradation of cellulosic biomass. Catalyzes the last step releasing glucose from the inhibitory cellobiose (By similarity).</text>
</comment>
<comment type="catalytic activity">
    <reaction>
        <text>Hydrolysis of terminal, non-reducing beta-D-glucosyl residues with release of beta-D-glucose.</text>
        <dbReference type="EC" id="3.2.1.21"/>
    </reaction>
</comment>
<comment type="pathway">
    <text>Glycan metabolism; cellulose degradation.</text>
</comment>
<comment type="subcellular location">
    <subcellularLocation>
        <location evidence="1">Secreted</location>
    </subcellularLocation>
</comment>
<comment type="similarity">
    <text evidence="4">Belongs to the glycosyl hydrolase 3 family.</text>
</comment>
<comment type="sequence caution" evidence="4">
    <conflict type="erroneous gene model prediction">
        <sequence resource="EMBL-CDS" id="EAA59569"/>
    </conflict>
</comment>
<keyword id="KW-0119">Carbohydrate metabolism</keyword>
<keyword id="KW-0136">Cellulose degradation</keyword>
<keyword id="KW-0325">Glycoprotein</keyword>
<keyword id="KW-0326">Glycosidase</keyword>
<keyword id="KW-0378">Hydrolase</keyword>
<keyword id="KW-0624">Polysaccharide degradation</keyword>
<keyword id="KW-1185">Reference proteome</keyword>
<keyword id="KW-0964">Secreted</keyword>
<keyword id="KW-0732">Signal</keyword>
<evidence type="ECO:0000250" key="1"/>
<evidence type="ECO:0000255" key="2"/>
<evidence type="ECO:0000256" key="3">
    <source>
        <dbReference type="SAM" id="MobiDB-lite"/>
    </source>
</evidence>
<evidence type="ECO:0000305" key="4"/>
<gene>
    <name type="primary">bglD</name>
    <name type="ORF">AN7915</name>
</gene>
<sequence>MRVPSLSVLSFLLGTALAAASNFEAGLLSSGKVSLGDWKSAHEKASQFVAKLNTTEKIKLITGSSVTTTNGETFTALDILDGDMGAQAYYYVSAFSLSSALAMTWDKEAMYEQGRAIAAEFYGKGIQMVAGPTSQPLGRTPWGGRLVESFGPDPYLNGIATGLETRAYADVGVIAGAKHFILNEQETNRTGGMGGGGGAPGGGGMGRGAEFSSSVPGGMSPTSSAGAIPSSTSTPGGSGMGGGMAGSSAFSSSSSSGAPYSSNADDKTLHETYLWSFYDAVHSGLGGVMCAMTKVNGTLSCQSSSLLLDILKTELGFPGMVWPDTNGQQDALASAANGLDYGSSSLWSESTIEGYLESNNITEARLNDMAIRNLMGYYYVNLDNGTQPSTAAQDDYVDVRANHAKLIRSHGSKSMVLLKNKNNTLPLYKPHKMAIFGSHARAAVAGPNMQFSVEGSGPTYDGHIATDSGSGQASLPYLITPENALNIKASQDGTMLRWIANDTYSSSTGSALVMQGSSSTSVTPSVSAYSENMDVCLVFINALAGEGADRTELRNTDQDNLINEVADNCDNTVVVINTVGARILDSWIEHENVTAVLYGSLLGQESGNSIVDVLYGDVNPSGRLTYTIAKTESDYNVDICYTAQCNFTEGNYIDYRYFDAYNVTPRYEFGYGLSYTDFAYSNLHIQGPSALSTYPTGQLAVGGYEDLWDTVAKVTVTIRNAGSLDGAEVPQLYISYPDVAKQPVRQLRGFHNVYIKKGQSTKVTFELRRRDISYWDVQHQKWAVAPGTYEAWVGASSRDLRTHGSFVVKTKA</sequence>
<organism>
    <name type="scientific">Emericella nidulans (strain FGSC A4 / ATCC 38163 / CBS 112.46 / NRRL 194 / M139)</name>
    <name type="common">Aspergillus nidulans</name>
    <dbReference type="NCBI Taxonomy" id="227321"/>
    <lineage>
        <taxon>Eukaryota</taxon>
        <taxon>Fungi</taxon>
        <taxon>Dikarya</taxon>
        <taxon>Ascomycota</taxon>
        <taxon>Pezizomycotina</taxon>
        <taxon>Eurotiomycetes</taxon>
        <taxon>Eurotiomycetidae</taxon>
        <taxon>Eurotiales</taxon>
        <taxon>Aspergillaceae</taxon>
        <taxon>Aspergillus</taxon>
        <taxon>Aspergillus subgen. Nidulantes</taxon>
    </lineage>
</organism>
<accession>Q5AUW5</accession>
<accession>C8V4V5</accession>
<reference key="1">
    <citation type="journal article" date="2005" name="Nature">
        <title>Sequencing of Aspergillus nidulans and comparative analysis with A. fumigatus and A. oryzae.</title>
        <authorList>
            <person name="Galagan J.E."/>
            <person name="Calvo S.E."/>
            <person name="Cuomo C."/>
            <person name="Ma L.-J."/>
            <person name="Wortman J.R."/>
            <person name="Batzoglou S."/>
            <person name="Lee S.-I."/>
            <person name="Bastuerkmen M."/>
            <person name="Spevak C.C."/>
            <person name="Clutterbuck J."/>
            <person name="Kapitonov V."/>
            <person name="Jurka J."/>
            <person name="Scazzocchio C."/>
            <person name="Farman M.L."/>
            <person name="Butler J."/>
            <person name="Purcell S."/>
            <person name="Harris S."/>
            <person name="Braus G.H."/>
            <person name="Draht O."/>
            <person name="Busch S."/>
            <person name="D'Enfert C."/>
            <person name="Bouchier C."/>
            <person name="Goldman G.H."/>
            <person name="Bell-Pedersen D."/>
            <person name="Griffiths-Jones S."/>
            <person name="Doonan J.H."/>
            <person name="Yu J."/>
            <person name="Vienken K."/>
            <person name="Pain A."/>
            <person name="Freitag M."/>
            <person name="Selker E.U."/>
            <person name="Archer D.B."/>
            <person name="Penalva M.A."/>
            <person name="Oakley B.R."/>
            <person name="Momany M."/>
            <person name="Tanaka T."/>
            <person name="Kumagai T."/>
            <person name="Asai K."/>
            <person name="Machida M."/>
            <person name="Nierman W.C."/>
            <person name="Denning D.W."/>
            <person name="Caddick M.X."/>
            <person name="Hynes M."/>
            <person name="Paoletti M."/>
            <person name="Fischer R."/>
            <person name="Miller B.L."/>
            <person name="Dyer P.S."/>
            <person name="Sachs M.S."/>
            <person name="Osmani S.A."/>
            <person name="Birren B.W."/>
        </authorList>
    </citation>
    <scope>NUCLEOTIDE SEQUENCE [LARGE SCALE GENOMIC DNA]</scope>
    <source>
        <strain>FGSC A4 / ATCC 38163 / CBS 112.46 / NRRL 194 / M139</strain>
    </source>
</reference>
<reference key="2">
    <citation type="journal article" date="2009" name="Fungal Genet. Biol.">
        <title>The 2008 update of the Aspergillus nidulans genome annotation: a community effort.</title>
        <authorList>
            <person name="Wortman J.R."/>
            <person name="Gilsenan J.M."/>
            <person name="Joardar V."/>
            <person name="Deegan J."/>
            <person name="Clutterbuck J."/>
            <person name="Andersen M.R."/>
            <person name="Archer D."/>
            <person name="Bencina M."/>
            <person name="Braus G."/>
            <person name="Coutinho P."/>
            <person name="von Dohren H."/>
            <person name="Doonan J."/>
            <person name="Driessen A.J."/>
            <person name="Durek P."/>
            <person name="Espeso E."/>
            <person name="Fekete E."/>
            <person name="Flipphi M."/>
            <person name="Estrada C.G."/>
            <person name="Geysens S."/>
            <person name="Goldman G."/>
            <person name="de Groot P.W."/>
            <person name="Hansen K."/>
            <person name="Harris S.D."/>
            <person name="Heinekamp T."/>
            <person name="Helmstaedt K."/>
            <person name="Henrissat B."/>
            <person name="Hofmann G."/>
            <person name="Homan T."/>
            <person name="Horio T."/>
            <person name="Horiuchi H."/>
            <person name="James S."/>
            <person name="Jones M."/>
            <person name="Karaffa L."/>
            <person name="Karanyi Z."/>
            <person name="Kato M."/>
            <person name="Keller N."/>
            <person name="Kelly D.E."/>
            <person name="Kiel J.A."/>
            <person name="Kim J.M."/>
            <person name="van der Klei I.J."/>
            <person name="Klis F.M."/>
            <person name="Kovalchuk A."/>
            <person name="Krasevec N."/>
            <person name="Kubicek C.P."/>
            <person name="Liu B."/>
            <person name="Maccabe A."/>
            <person name="Meyer V."/>
            <person name="Mirabito P."/>
            <person name="Miskei M."/>
            <person name="Mos M."/>
            <person name="Mullins J."/>
            <person name="Nelson D.R."/>
            <person name="Nielsen J."/>
            <person name="Oakley B.R."/>
            <person name="Osmani S.A."/>
            <person name="Pakula T."/>
            <person name="Paszewski A."/>
            <person name="Paulsen I."/>
            <person name="Pilsyk S."/>
            <person name="Pocsi I."/>
            <person name="Punt P.J."/>
            <person name="Ram A.F."/>
            <person name="Ren Q."/>
            <person name="Robellet X."/>
            <person name="Robson G."/>
            <person name="Seiboth B."/>
            <person name="van Solingen P."/>
            <person name="Specht T."/>
            <person name="Sun J."/>
            <person name="Taheri-Talesh N."/>
            <person name="Takeshita N."/>
            <person name="Ussery D."/>
            <person name="vanKuyk P.A."/>
            <person name="Visser H."/>
            <person name="van de Vondervoort P.J."/>
            <person name="de Vries R.P."/>
            <person name="Walton J."/>
            <person name="Xiang X."/>
            <person name="Xiong Y."/>
            <person name="Zeng A.P."/>
            <person name="Brandt B.W."/>
            <person name="Cornell M.J."/>
            <person name="van den Hondel C.A."/>
            <person name="Visser J."/>
            <person name="Oliver S.G."/>
            <person name="Turner G."/>
        </authorList>
    </citation>
    <scope>GENOME REANNOTATION</scope>
    <source>
        <strain>FGSC A4 / ATCC 38163 / CBS 112.46 / NRRL 194 / M139</strain>
    </source>
</reference>
<name>BGLD_EMENI</name>